<keyword id="KW-1185">Reference proteome</keyword>
<name>YERC_BACSU</name>
<protein>
    <recommendedName>
        <fullName>Uncharacterized protein YerC</fullName>
    </recommendedName>
</protein>
<proteinExistence type="predicted"/>
<feature type="chain" id="PRO_0000379507" description="Uncharacterized protein YerC">
    <location>
        <begin position="1"/>
        <end position="104"/>
    </location>
</feature>
<organism>
    <name type="scientific">Bacillus subtilis (strain 168)</name>
    <dbReference type="NCBI Taxonomy" id="224308"/>
    <lineage>
        <taxon>Bacteria</taxon>
        <taxon>Bacillati</taxon>
        <taxon>Bacillota</taxon>
        <taxon>Bacilli</taxon>
        <taxon>Bacillales</taxon>
        <taxon>Bacillaceae</taxon>
        <taxon>Bacillus</taxon>
    </lineage>
</organism>
<gene>
    <name type="primary">yerC</name>
    <name type="synonym">yecD</name>
    <name type="ordered locus">BSU06580</name>
</gene>
<dbReference type="EMBL" id="AF011544">
    <property type="protein sequence ID" value="AAB72190.1"/>
    <property type="molecule type" value="Genomic_DNA"/>
</dbReference>
<dbReference type="EMBL" id="Y15254">
    <property type="protein sequence ID" value="CAA75549.1"/>
    <property type="molecule type" value="Genomic_DNA"/>
</dbReference>
<dbReference type="EMBL" id="AL009126">
    <property type="protein sequence ID" value="CAB12478.1"/>
    <property type="molecule type" value="Genomic_DNA"/>
</dbReference>
<dbReference type="PIR" id="B69794">
    <property type="entry name" value="B69794"/>
</dbReference>
<dbReference type="RefSeq" id="NP_388540.1">
    <property type="nucleotide sequence ID" value="NC_000964.3"/>
</dbReference>
<dbReference type="RefSeq" id="WP_003219429.1">
    <property type="nucleotide sequence ID" value="NZ_OZ025638.1"/>
</dbReference>
<dbReference type="SMR" id="Q7BVT7"/>
<dbReference type="FunCoup" id="Q7BVT7">
    <property type="interactions" value="8"/>
</dbReference>
<dbReference type="STRING" id="224308.BSU06580"/>
<dbReference type="jPOST" id="Q7BVT7"/>
<dbReference type="PaxDb" id="224308-BSU06580"/>
<dbReference type="EnsemblBacteria" id="CAB12478">
    <property type="protein sequence ID" value="CAB12478"/>
    <property type="gene ID" value="BSU_06580"/>
</dbReference>
<dbReference type="GeneID" id="936049"/>
<dbReference type="KEGG" id="bsu:BSU06580"/>
<dbReference type="PATRIC" id="fig|224308.179.peg.715"/>
<dbReference type="eggNOG" id="COG4496">
    <property type="taxonomic scope" value="Bacteria"/>
</dbReference>
<dbReference type="InParanoid" id="Q7BVT7"/>
<dbReference type="OrthoDB" id="2874807at2"/>
<dbReference type="PhylomeDB" id="Q7BVT7"/>
<dbReference type="BioCyc" id="BSUB:BSU06580-MONOMER"/>
<dbReference type="PRO" id="PR:Q7BVT7"/>
<dbReference type="Proteomes" id="UP000001570">
    <property type="component" value="Chromosome"/>
</dbReference>
<dbReference type="GO" id="GO:0003700">
    <property type="term" value="F:DNA-binding transcription factor activity"/>
    <property type="evidence" value="ECO:0007669"/>
    <property type="project" value="InterPro"/>
</dbReference>
<dbReference type="GO" id="GO:0043565">
    <property type="term" value="F:sequence-specific DNA binding"/>
    <property type="evidence" value="ECO:0007669"/>
    <property type="project" value="InterPro"/>
</dbReference>
<dbReference type="Gene3D" id="1.10.1270.10">
    <property type="entry name" value="TrpR-like"/>
    <property type="match status" value="1"/>
</dbReference>
<dbReference type="InterPro" id="IPR000831">
    <property type="entry name" value="Trp_repress"/>
</dbReference>
<dbReference type="InterPro" id="IPR010921">
    <property type="entry name" value="Trp_repressor/repl_initiator"/>
</dbReference>
<dbReference type="InterPro" id="IPR038116">
    <property type="entry name" value="TrpR-like_sf"/>
</dbReference>
<dbReference type="InterPro" id="IPR013368">
    <property type="entry name" value="YecD_YerC"/>
</dbReference>
<dbReference type="NCBIfam" id="TIGR02531">
    <property type="entry name" value="yecD_yerC"/>
    <property type="match status" value="1"/>
</dbReference>
<dbReference type="PANTHER" id="PTHR40080">
    <property type="entry name" value="LMO1763 PROTEIN"/>
    <property type="match status" value="1"/>
</dbReference>
<dbReference type="PANTHER" id="PTHR40080:SF1">
    <property type="entry name" value="TRPR-LIKE PROTEIN YERC_YECD"/>
    <property type="match status" value="1"/>
</dbReference>
<dbReference type="Pfam" id="PF01371">
    <property type="entry name" value="Trp_repressor"/>
    <property type="match status" value="1"/>
</dbReference>
<dbReference type="PIRSF" id="PIRSF012508">
    <property type="entry name" value="YerC"/>
    <property type="match status" value="1"/>
</dbReference>
<dbReference type="SUPFAM" id="SSF48295">
    <property type="entry name" value="TrpR-like"/>
    <property type="match status" value="1"/>
</dbReference>
<sequence length="104" mass="12032">MQIDKLRGKELDQLFNSILSLKDLEECYRFFDDLCTINEIQSLAQRLEVARMLREGNTYHKIETETGASTATISRVKRCLNYGNDAYEMALDRVKETETESSSK</sequence>
<accession>Q7BVT7</accession>
<accession>O34975</accession>
<reference key="1">
    <citation type="journal article" date="1996" name="Microbiology">
        <title>The 52 degrees-55 degrees segment of the Bacillus subtilis chromosome: a region devoted to purine uptake and metabolism, and containing the genes cotA, gabP and guaA and the pur gene cluster within a 34960 bp nucleotide sequence.</title>
        <authorList>
            <person name="Borriss R."/>
            <person name="Porwollik S."/>
            <person name="Schroeter R."/>
        </authorList>
    </citation>
    <scope>NUCLEOTIDE SEQUENCE [GENOMIC DNA]</scope>
    <source>
        <strain>168</strain>
    </source>
</reference>
<reference key="2">
    <citation type="journal article" date="1998" name="Mol. Microbiol.">
        <title>PcrA is an essential DNA helicase of Bacillus subtilis fulfilling functions both in repair and rolling-circle replication.</title>
        <authorList>
            <person name="Petit M.-A."/>
            <person name="Dervyn E."/>
            <person name="Rose M."/>
            <person name="Entian K.-D."/>
            <person name="McGovern S."/>
            <person name="Ehrlich S.D."/>
            <person name="Bruand C."/>
        </authorList>
    </citation>
    <scope>NUCLEOTIDE SEQUENCE [GENOMIC DNA]</scope>
    <source>
        <strain>168</strain>
    </source>
</reference>
<reference key="3">
    <citation type="journal article" date="1997" name="Nature">
        <title>The complete genome sequence of the Gram-positive bacterium Bacillus subtilis.</title>
        <authorList>
            <person name="Kunst F."/>
            <person name="Ogasawara N."/>
            <person name="Moszer I."/>
            <person name="Albertini A.M."/>
            <person name="Alloni G."/>
            <person name="Azevedo V."/>
            <person name="Bertero M.G."/>
            <person name="Bessieres P."/>
            <person name="Bolotin A."/>
            <person name="Borchert S."/>
            <person name="Borriss R."/>
            <person name="Boursier L."/>
            <person name="Brans A."/>
            <person name="Braun M."/>
            <person name="Brignell S.C."/>
            <person name="Bron S."/>
            <person name="Brouillet S."/>
            <person name="Bruschi C.V."/>
            <person name="Caldwell B."/>
            <person name="Capuano V."/>
            <person name="Carter N.M."/>
            <person name="Choi S.-K."/>
            <person name="Codani J.-J."/>
            <person name="Connerton I.F."/>
            <person name="Cummings N.J."/>
            <person name="Daniel R.A."/>
            <person name="Denizot F."/>
            <person name="Devine K.M."/>
            <person name="Duesterhoeft A."/>
            <person name="Ehrlich S.D."/>
            <person name="Emmerson P.T."/>
            <person name="Entian K.-D."/>
            <person name="Errington J."/>
            <person name="Fabret C."/>
            <person name="Ferrari E."/>
            <person name="Foulger D."/>
            <person name="Fritz C."/>
            <person name="Fujita M."/>
            <person name="Fujita Y."/>
            <person name="Fuma S."/>
            <person name="Galizzi A."/>
            <person name="Galleron N."/>
            <person name="Ghim S.-Y."/>
            <person name="Glaser P."/>
            <person name="Goffeau A."/>
            <person name="Golightly E.J."/>
            <person name="Grandi G."/>
            <person name="Guiseppi G."/>
            <person name="Guy B.J."/>
            <person name="Haga K."/>
            <person name="Haiech J."/>
            <person name="Harwood C.R."/>
            <person name="Henaut A."/>
            <person name="Hilbert H."/>
            <person name="Holsappel S."/>
            <person name="Hosono S."/>
            <person name="Hullo M.-F."/>
            <person name="Itaya M."/>
            <person name="Jones L.-M."/>
            <person name="Joris B."/>
            <person name="Karamata D."/>
            <person name="Kasahara Y."/>
            <person name="Klaerr-Blanchard M."/>
            <person name="Klein C."/>
            <person name="Kobayashi Y."/>
            <person name="Koetter P."/>
            <person name="Koningstein G."/>
            <person name="Krogh S."/>
            <person name="Kumano M."/>
            <person name="Kurita K."/>
            <person name="Lapidus A."/>
            <person name="Lardinois S."/>
            <person name="Lauber J."/>
            <person name="Lazarevic V."/>
            <person name="Lee S.-M."/>
            <person name="Levine A."/>
            <person name="Liu H."/>
            <person name="Masuda S."/>
            <person name="Mauel C."/>
            <person name="Medigue C."/>
            <person name="Medina N."/>
            <person name="Mellado R.P."/>
            <person name="Mizuno M."/>
            <person name="Moestl D."/>
            <person name="Nakai S."/>
            <person name="Noback M."/>
            <person name="Noone D."/>
            <person name="O'Reilly M."/>
            <person name="Ogawa K."/>
            <person name="Ogiwara A."/>
            <person name="Oudega B."/>
            <person name="Park S.-H."/>
            <person name="Parro V."/>
            <person name="Pohl T.M."/>
            <person name="Portetelle D."/>
            <person name="Porwollik S."/>
            <person name="Prescott A.M."/>
            <person name="Presecan E."/>
            <person name="Pujic P."/>
            <person name="Purnelle B."/>
            <person name="Rapoport G."/>
            <person name="Rey M."/>
            <person name="Reynolds S."/>
            <person name="Rieger M."/>
            <person name="Rivolta C."/>
            <person name="Rocha E."/>
            <person name="Roche B."/>
            <person name="Rose M."/>
            <person name="Sadaie Y."/>
            <person name="Sato T."/>
            <person name="Scanlan E."/>
            <person name="Schleich S."/>
            <person name="Schroeter R."/>
            <person name="Scoffone F."/>
            <person name="Sekiguchi J."/>
            <person name="Sekowska A."/>
            <person name="Seror S.J."/>
            <person name="Serror P."/>
            <person name="Shin B.-S."/>
            <person name="Soldo B."/>
            <person name="Sorokin A."/>
            <person name="Tacconi E."/>
            <person name="Takagi T."/>
            <person name="Takahashi H."/>
            <person name="Takemaru K."/>
            <person name="Takeuchi M."/>
            <person name="Tamakoshi A."/>
            <person name="Tanaka T."/>
            <person name="Terpstra P."/>
            <person name="Tognoni A."/>
            <person name="Tosato V."/>
            <person name="Uchiyama S."/>
            <person name="Vandenbol M."/>
            <person name="Vannier F."/>
            <person name="Vassarotti A."/>
            <person name="Viari A."/>
            <person name="Wambutt R."/>
            <person name="Wedler E."/>
            <person name="Wedler H."/>
            <person name="Weitzenegger T."/>
            <person name="Winters P."/>
            <person name="Wipat A."/>
            <person name="Yamamoto H."/>
            <person name="Yamane K."/>
            <person name="Yasumoto K."/>
            <person name="Yata K."/>
            <person name="Yoshida K."/>
            <person name="Yoshikawa H.-F."/>
            <person name="Zumstein E."/>
            <person name="Yoshikawa H."/>
            <person name="Danchin A."/>
        </authorList>
    </citation>
    <scope>NUCLEOTIDE SEQUENCE [LARGE SCALE GENOMIC DNA]</scope>
    <source>
        <strain>168</strain>
    </source>
</reference>